<gene>
    <name type="ordered locus">MG014</name>
</gene>
<evidence type="ECO:0000255" key="1">
    <source>
        <dbReference type="PROSITE-ProRule" id="PRU00434"/>
    </source>
</evidence>
<evidence type="ECO:0000255" key="2">
    <source>
        <dbReference type="PROSITE-ProRule" id="PRU00441"/>
    </source>
</evidence>
<evidence type="ECO:0000305" key="3"/>
<keyword id="KW-0067">ATP-binding</keyword>
<keyword id="KW-1003">Cell membrane</keyword>
<keyword id="KW-0472">Membrane</keyword>
<keyword id="KW-0547">Nucleotide-binding</keyword>
<keyword id="KW-1185">Reference proteome</keyword>
<keyword id="KW-0812">Transmembrane</keyword>
<keyword id="KW-1133">Transmembrane helix</keyword>
<keyword id="KW-0813">Transport</keyword>
<comment type="subcellular location">
    <subcellularLocation>
        <location evidence="3">Cell membrane</location>
        <topology evidence="2">Multi-pass membrane protein</topology>
    </subcellularLocation>
</comment>
<comment type="similarity">
    <text evidence="3">Belongs to the ABC transporter superfamily.</text>
</comment>
<sequence>MGLVLKEFNNKIRTALILAPFFTFAQIVIDLIIPSFLASAISVVFSIDKLKQDESGGKTISVDFIGGANINFANVREAQIVLATTVILLALCGLFFGLISIYCASYVSANTSFLLRKKIFAKLMRITTPSHDHYGSSTLLVRLTNDVYLMEVIAFDFLRLIIRAPLLFIGGLVFAVTTNQDMSISLLITFPLILLVIGILNRKSIPLFKENQKSVDKINERVEEDVSGYKVIQSFNLHSFTNNKFKIANEGWKKNSTSSLFINSLNIPFTFFLSSLTIIIALLLVFQLDSSVSVDPLPQDAAIRPNIFAFFQYNFYIVLGFILTSLTMVNFNRSRVALGRIKDILSQPEIKTITNKDQKELLPTLEFRNISFGLGNKNNNNFLQNLSFKFEAYKTYGIVGPTGSGKSLIANIIGGLYEPNEGEILIGGEKIQSIDSLYLSEMIGIVFQQNILFKGTISSNIKIGIETRSDWKNQSDLQKNEAMKNAAKIACADTFIEKFSDSYDHNVEQLGKNLSGGQKQRVAIARTLITKPRILVFDDSMSALDALTEKKVRENIENDLKLTTKIIISQNINSIKHADKILVIDNGRIVGFDSDQKLMKNCSLYQKMKESQKDLGGDFDAVN</sequence>
<reference key="1">
    <citation type="journal article" date="1995" name="Science">
        <title>The minimal gene complement of Mycoplasma genitalium.</title>
        <authorList>
            <person name="Fraser C.M."/>
            <person name="Gocayne J.D."/>
            <person name="White O."/>
            <person name="Adams M.D."/>
            <person name="Clayton R.A."/>
            <person name="Fleischmann R.D."/>
            <person name="Bult C.J."/>
            <person name="Kerlavage A.R."/>
            <person name="Sutton G.G."/>
            <person name="Kelley J.M."/>
            <person name="Fritchman J.L."/>
            <person name="Weidman J.F."/>
            <person name="Small K.V."/>
            <person name="Sandusky M."/>
            <person name="Fuhrmann J.L."/>
            <person name="Nguyen D.T."/>
            <person name="Utterback T.R."/>
            <person name="Saudek D.M."/>
            <person name="Phillips C.A."/>
            <person name="Merrick J.M."/>
            <person name="Tomb J.-F."/>
            <person name="Dougherty B.A."/>
            <person name="Bott K.F."/>
            <person name="Hu P.-C."/>
            <person name="Lucier T.S."/>
            <person name="Peterson S.N."/>
            <person name="Smith H.O."/>
            <person name="Hutchison C.A. III"/>
            <person name="Venter J.C."/>
        </authorList>
    </citation>
    <scope>NUCLEOTIDE SEQUENCE [LARGE SCALE GENOMIC DNA]</scope>
    <source>
        <strain>ATCC 33530 / DSM 19775 / NCTC 10195 / G37</strain>
    </source>
</reference>
<reference key="2">
    <citation type="journal article" date="1993" name="J. Bacteriol.">
        <title>A survey of the Mycoplasma genitalium genome by using random sequencing.</title>
        <authorList>
            <person name="Peterson S.N."/>
            <person name="Hu P.-C."/>
            <person name="Bott K.F."/>
            <person name="Hutchison C.A. III"/>
        </authorList>
    </citation>
    <scope>NUCLEOTIDE SEQUENCE [GENOMIC DNA] OF 227-333</scope>
    <source>
        <strain>ATCC 33530 / DSM 19775 / NCTC 10195 / G37</strain>
    </source>
</reference>
<protein>
    <recommendedName>
        <fullName>Putative ABC transporter ATP-binding protein MG014</fullName>
    </recommendedName>
</protein>
<feature type="chain" id="PRO_0000093235" description="Putative ABC transporter ATP-binding protein MG014">
    <location>
        <begin position="1"/>
        <end position="623"/>
    </location>
</feature>
<feature type="transmembrane region" description="Helical" evidence="2">
    <location>
        <begin position="27"/>
        <end position="47"/>
    </location>
</feature>
<feature type="transmembrane region" description="Helical" evidence="2">
    <location>
        <begin position="81"/>
        <end position="101"/>
    </location>
</feature>
<feature type="transmembrane region" description="Helical" evidence="2">
    <location>
        <begin position="157"/>
        <end position="177"/>
    </location>
</feature>
<feature type="transmembrane region" description="Helical" evidence="2">
    <location>
        <begin position="181"/>
        <end position="201"/>
    </location>
</feature>
<feature type="transmembrane region" description="Helical" evidence="2">
    <location>
        <begin position="266"/>
        <end position="286"/>
    </location>
</feature>
<feature type="transmembrane region" description="Helical" evidence="2">
    <location>
        <begin position="307"/>
        <end position="327"/>
    </location>
</feature>
<feature type="domain" description="ABC transmembrane type-1" evidence="2">
    <location>
        <begin position="16"/>
        <end position="325"/>
    </location>
</feature>
<feature type="domain" description="ABC transporter" evidence="1">
    <location>
        <begin position="365"/>
        <end position="611"/>
    </location>
</feature>
<feature type="binding site" evidence="1">
    <location>
        <begin position="400"/>
        <end position="407"/>
    </location>
    <ligand>
        <name>ATP</name>
        <dbReference type="ChEBI" id="CHEBI:30616"/>
    </ligand>
</feature>
<feature type="sequence conflict" description="In Ref. 2; AAA03387." evidence="3" ref="2">
    <original>FNR</original>
    <variation>LIV</variation>
    <location>
        <begin position="331"/>
        <end position="333"/>
    </location>
</feature>
<name>Y014_MYCGE</name>
<organism>
    <name type="scientific">Mycoplasma genitalium (strain ATCC 33530 / DSM 19775 / NCTC 10195 / G37)</name>
    <name type="common">Mycoplasmoides genitalium</name>
    <dbReference type="NCBI Taxonomy" id="243273"/>
    <lineage>
        <taxon>Bacteria</taxon>
        <taxon>Bacillati</taxon>
        <taxon>Mycoplasmatota</taxon>
        <taxon>Mycoplasmoidales</taxon>
        <taxon>Mycoplasmoidaceae</taxon>
        <taxon>Mycoplasmoides</taxon>
    </lineage>
</organism>
<accession>P47260</accession>
<accession>Q49343</accession>
<dbReference type="EMBL" id="L43967">
    <property type="protein sequence ID" value="AAC71230.1"/>
    <property type="molecule type" value="Genomic_DNA"/>
</dbReference>
<dbReference type="EMBL" id="U02235">
    <property type="protein sequence ID" value="AAA03387.1"/>
    <property type="molecule type" value="Genomic_DNA"/>
</dbReference>
<dbReference type="PIR" id="E64201">
    <property type="entry name" value="E64201"/>
</dbReference>
<dbReference type="RefSeq" id="WP_010869290.1">
    <property type="nucleotide sequence ID" value="NC_000908.2"/>
</dbReference>
<dbReference type="SMR" id="P47260"/>
<dbReference type="FunCoup" id="P47260">
    <property type="interactions" value="179"/>
</dbReference>
<dbReference type="STRING" id="243273.MG_014"/>
<dbReference type="GeneID" id="88282131"/>
<dbReference type="KEGG" id="mge:MG_014"/>
<dbReference type="eggNOG" id="COG1132">
    <property type="taxonomic scope" value="Bacteria"/>
</dbReference>
<dbReference type="HOGENOM" id="CLU_000604_84_3_14"/>
<dbReference type="InParanoid" id="P47260"/>
<dbReference type="OrthoDB" id="383768at2"/>
<dbReference type="BioCyc" id="MGEN243273:G1GJ2-16-MONOMER"/>
<dbReference type="Proteomes" id="UP000000807">
    <property type="component" value="Chromosome"/>
</dbReference>
<dbReference type="GO" id="GO:0005886">
    <property type="term" value="C:plasma membrane"/>
    <property type="evidence" value="ECO:0007669"/>
    <property type="project" value="UniProtKB-SubCell"/>
</dbReference>
<dbReference type="GO" id="GO:0140359">
    <property type="term" value="F:ABC-type transporter activity"/>
    <property type="evidence" value="ECO:0007669"/>
    <property type="project" value="InterPro"/>
</dbReference>
<dbReference type="GO" id="GO:0005524">
    <property type="term" value="F:ATP binding"/>
    <property type="evidence" value="ECO:0007669"/>
    <property type="project" value="UniProtKB-KW"/>
</dbReference>
<dbReference type="GO" id="GO:0016887">
    <property type="term" value="F:ATP hydrolysis activity"/>
    <property type="evidence" value="ECO:0007669"/>
    <property type="project" value="InterPro"/>
</dbReference>
<dbReference type="CDD" id="cd18548">
    <property type="entry name" value="ABC_6TM_Tm287_like"/>
    <property type="match status" value="1"/>
</dbReference>
<dbReference type="FunFam" id="3.40.50.300:FF:000854">
    <property type="entry name" value="Multidrug ABC transporter ATP-binding protein"/>
    <property type="match status" value="1"/>
</dbReference>
<dbReference type="Gene3D" id="1.20.1560.10">
    <property type="entry name" value="ABC transporter type 1, transmembrane domain"/>
    <property type="match status" value="1"/>
</dbReference>
<dbReference type="Gene3D" id="3.40.50.300">
    <property type="entry name" value="P-loop containing nucleotide triphosphate hydrolases"/>
    <property type="match status" value="1"/>
</dbReference>
<dbReference type="InterPro" id="IPR003593">
    <property type="entry name" value="AAA+_ATPase"/>
</dbReference>
<dbReference type="InterPro" id="IPR011527">
    <property type="entry name" value="ABC1_TM_dom"/>
</dbReference>
<dbReference type="InterPro" id="IPR036640">
    <property type="entry name" value="ABC1_TM_sf"/>
</dbReference>
<dbReference type="InterPro" id="IPR003439">
    <property type="entry name" value="ABC_transporter-like_ATP-bd"/>
</dbReference>
<dbReference type="InterPro" id="IPR017871">
    <property type="entry name" value="ABC_transporter-like_CS"/>
</dbReference>
<dbReference type="InterPro" id="IPR027417">
    <property type="entry name" value="P-loop_NTPase"/>
</dbReference>
<dbReference type="InterPro" id="IPR039421">
    <property type="entry name" value="Type_1_exporter"/>
</dbReference>
<dbReference type="PANTHER" id="PTHR43394:SF1">
    <property type="entry name" value="ATP-BINDING CASSETTE SUB-FAMILY B MEMBER 10, MITOCHONDRIAL"/>
    <property type="match status" value="1"/>
</dbReference>
<dbReference type="PANTHER" id="PTHR43394">
    <property type="entry name" value="ATP-DEPENDENT PERMEASE MDL1, MITOCHONDRIAL"/>
    <property type="match status" value="1"/>
</dbReference>
<dbReference type="Pfam" id="PF00664">
    <property type="entry name" value="ABC_membrane"/>
    <property type="match status" value="1"/>
</dbReference>
<dbReference type="Pfam" id="PF00005">
    <property type="entry name" value="ABC_tran"/>
    <property type="match status" value="1"/>
</dbReference>
<dbReference type="SMART" id="SM00382">
    <property type="entry name" value="AAA"/>
    <property type="match status" value="1"/>
</dbReference>
<dbReference type="SUPFAM" id="SSF90123">
    <property type="entry name" value="ABC transporter transmembrane region"/>
    <property type="match status" value="1"/>
</dbReference>
<dbReference type="SUPFAM" id="SSF52540">
    <property type="entry name" value="P-loop containing nucleoside triphosphate hydrolases"/>
    <property type="match status" value="1"/>
</dbReference>
<dbReference type="PROSITE" id="PS50929">
    <property type="entry name" value="ABC_TM1F"/>
    <property type="match status" value="1"/>
</dbReference>
<dbReference type="PROSITE" id="PS00211">
    <property type="entry name" value="ABC_TRANSPORTER_1"/>
    <property type="match status" value="1"/>
</dbReference>
<dbReference type="PROSITE" id="PS50893">
    <property type="entry name" value="ABC_TRANSPORTER_2"/>
    <property type="match status" value="1"/>
</dbReference>
<proteinExistence type="inferred from homology"/>